<gene>
    <name evidence="7" type="primary">nr2c1</name>
    <name evidence="2" type="synonym">dor2</name>
    <name type="ORF">TEgg078f23.1</name>
</gene>
<evidence type="ECO:0000250" key="1"/>
<evidence type="ECO:0000250" key="2">
    <source>
        <dbReference type="UniProtKB" id="Q6GN21"/>
    </source>
</evidence>
<evidence type="ECO:0000255" key="3"/>
<evidence type="ECO:0000255" key="4">
    <source>
        <dbReference type="PROSITE-ProRule" id="PRU00407"/>
    </source>
</evidence>
<evidence type="ECO:0000255" key="5">
    <source>
        <dbReference type="PROSITE-ProRule" id="PRU01189"/>
    </source>
</evidence>
<evidence type="ECO:0000312" key="6">
    <source>
        <dbReference type="EMBL" id="AAI23035.1"/>
    </source>
</evidence>
<evidence type="ECO:0000312" key="7">
    <source>
        <dbReference type="EMBL" id="CAJ83740.1"/>
    </source>
</evidence>
<name>NR2C1_XENTR</name>
<accession>Q28CK1</accession>
<reference evidence="7" key="1">
    <citation type="submission" date="2006-10" db="EMBL/GenBank/DDBJ databases">
        <authorList>
            <consortium name="Sanger Xenopus tropicalis EST/cDNA project"/>
        </authorList>
    </citation>
    <scope>NUCLEOTIDE SEQUENCE [LARGE SCALE MRNA]</scope>
    <source>
        <tissue evidence="7">Egg</tissue>
    </source>
</reference>
<reference evidence="7" key="2">
    <citation type="submission" date="2006-09" db="EMBL/GenBank/DDBJ databases">
        <authorList>
            <consortium name="NIH - Xenopus Gene Collection (XGC) project"/>
        </authorList>
    </citation>
    <scope>NUCLEOTIDE SEQUENCE [LARGE SCALE MRNA]</scope>
    <source>
        <strain evidence="6">N6</strain>
        <tissue evidence="6">Oviduct</tissue>
    </source>
</reference>
<comment type="function">
    <text evidence="1">Orphan nuclear receptor. Binds the IR7 element in the promoter of its own gene in an autoregulatory negative feedback mechanism. Primarily repressor of a broad range of genes. Binds to hormone response elements (HREs) consisting of two 5'-AGGTCA-3' half site direct repeat consensus sequences (By similarity).</text>
</comment>
<comment type="subcellular location">
    <subcellularLocation>
        <location evidence="4">Nucleus</location>
    </subcellularLocation>
</comment>
<comment type="similarity">
    <text evidence="3">Belongs to the nuclear hormone receptor family. NR2 subfamily.</text>
</comment>
<keyword id="KW-0010">Activator</keyword>
<keyword id="KW-0238">DNA-binding</keyword>
<keyword id="KW-0479">Metal-binding</keyword>
<keyword id="KW-0539">Nucleus</keyword>
<keyword id="KW-0675">Receptor</keyword>
<keyword id="KW-1185">Reference proteome</keyword>
<keyword id="KW-0678">Repressor</keyword>
<keyword id="KW-0804">Transcription</keyword>
<keyword id="KW-0805">Transcription regulation</keyword>
<keyword id="KW-0862">Zinc</keyword>
<keyword id="KW-0863">Zinc-finger</keyword>
<proteinExistence type="evidence at transcript level"/>
<sequence length="636" mass="70465">MASIEEIAHQIIEQQMGEISRSQPEISQTALMDGTTQRIQLVPSESSVSVPQRIQIVTDPQTGQKIQIVTALDQSGASKQFILTNNDGSLPSKVILTRQDSSQGKVYLTTPDAAGVNQLFISTPDVPAQHIQILSDTQCLDQNLNKQLVELCVVCGDKASGRHYGAVTCEGCKGFFKRSIRKNLVYTCRGSKDCVINKHYRNRCQYCRLQRCIALGMKQDSVQCERKPIEVSREKSSNCAASTEKIYIRKDLRSPLAATTTFVTENKTSRTTSLLDSGMLVNIQQSGVKNESILITPNKVDACQGDLSTLANVVTSLANLNKSKELPQTNTELSIIESLSNGDSSLSELAQDDQSNSEVTRAFDTLAKALNQSENSAQGSSECVGSNSNLTDANVEIEGPLLSDAHIAFRLTMPSPMPEYLNVHYICESASRLLFLSMHWARSIPSFQSLGQENSISLVKACWNELFSLGLAQCCQVMNVETILAAFVNHLHNSMQHDKLSADKVKLVMDHIFKLQEFCNSMVKLSVDGYEYAYLKAIALFSPDHPGLENVSHIEKLQEKAYMEFQDYVTKTYPEDTYRLSRLLLRLPALRLLNAAITEELFFAGLIGNVQIDSIIPYILRMETSDYNSQIIGLTV</sequence>
<feature type="chain" id="PRO_0000287914" description="Nuclear receptor subfamily 2 group C member 1">
    <location>
        <begin position="1"/>
        <end position="636"/>
    </location>
</feature>
<feature type="domain" description="NR LBD" evidence="5">
    <location>
        <begin position="382"/>
        <end position="623"/>
    </location>
</feature>
<feature type="DNA-binding region" description="Nuclear receptor" evidence="4">
    <location>
        <begin position="149"/>
        <end position="224"/>
    </location>
</feature>
<feature type="zinc finger region" description="NR C4-type" evidence="4">
    <location>
        <begin position="152"/>
        <end position="172"/>
    </location>
</feature>
<feature type="zinc finger region" description="NR C4-type" evidence="4">
    <location>
        <begin position="188"/>
        <end position="207"/>
    </location>
</feature>
<protein>
    <recommendedName>
        <fullName>Nuclear receptor subfamily 2 group C member 1</fullName>
    </recommendedName>
    <alternativeName>
        <fullName>Developmental orphan receptor 2</fullName>
        <shortName>DOR2</shortName>
    </alternativeName>
    <alternativeName>
        <fullName>Orphan nuclear receptor TR2</fullName>
    </alternativeName>
    <alternativeName>
        <fullName>Testicular receptor 2</fullName>
    </alternativeName>
</protein>
<dbReference type="EMBL" id="CR926338">
    <property type="protein sequence ID" value="CAJ83740.1"/>
    <property type="molecule type" value="mRNA"/>
</dbReference>
<dbReference type="EMBL" id="BC123034">
    <property type="protein sequence ID" value="AAI23035.1"/>
    <property type="molecule type" value="mRNA"/>
</dbReference>
<dbReference type="RefSeq" id="NP_001016207.1">
    <property type="nucleotide sequence ID" value="NM_001016207.2"/>
</dbReference>
<dbReference type="RefSeq" id="XP_012814450.1">
    <property type="nucleotide sequence ID" value="XM_012958996.3"/>
</dbReference>
<dbReference type="RefSeq" id="XP_012814451.1">
    <property type="nucleotide sequence ID" value="XM_012958997.3"/>
</dbReference>
<dbReference type="SMR" id="Q28CK1"/>
<dbReference type="FunCoup" id="Q28CK1">
    <property type="interactions" value="3770"/>
</dbReference>
<dbReference type="STRING" id="8364.ENSXETP00000013305"/>
<dbReference type="PaxDb" id="8364-ENSXETP00000051399"/>
<dbReference type="DNASU" id="548961"/>
<dbReference type="GeneID" id="548961"/>
<dbReference type="KEGG" id="xtr:548961"/>
<dbReference type="AGR" id="Xenbase:XB-GENE-484727"/>
<dbReference type="CTD" id="7181"/>
<dbReference type="Xenbase" id="XB-GENE-484727">
    <property type="gene designation" value="nr2c1"/>
</dbReference>
<dbReference type="eggNOG" id="KOG3575">
    <property type="taxonomic scope" value="Eukaryota"/>
</dbReference>
<dbReference type="HOGENOM" id="CLU_007368_16_2_1"/>
<dbReference type="InParanoid" id="Q28CK1"/>
<dbReference type="OMA" id="NCGELCV"/>
<dbReference type="OrthoDB" id="10024684at2759"/>
<dbReference type="PhylomeDB" id="Q28CK1"/>
<dbReference type="Reactome" id="R-XTR-383280">
    <property type="pathway name" value="Nuclear Receptor transcription pathway"/>
</dbReference>
<dbReference type="Proteomes" id="UP000008143">
    <property type="component" value="Chromosome 3"/>
</dbReference>
<dbReference type="Bgee" id="ENSXETG00000023840">
    <property type="expression patterns" value="Expressed in testis and 13 other cell types or tissues"/>
</dbReference>
<dbReference type="GO" id="GO:0005634">
    <property type="term" value="C:nucleus"/>
    <property type="evidence" value="ECO:0000250"/>
    <property type="project" value="UniProtKB"/>
</dbReference>
<dbReference type="GO" id="GO:0003677">
    <property type="term" value="F:DNA binding"/>
    <property type="evidence" value="ECO:0000250"/>
    <property type="project" value="UniProtKB"/>
</dbReference>
<dbReference type="GO" id="GO:0003700">
    <property type="term" value="F:DNA-binding transcription factor activity"/>
    <property type="evidence" value="ECO:0007669"/>
    <property type="project" value="InterPro"/>
</dbReference>
<dbReference type="GO" id="GO:0043565">
    <property type="term" value="F:sequence-specific DNA binding"/>
    <property type="evidence" value="ECO:0007669"/>
    <property type="project" value="InterPro"/>
</dbReference>
<dbReference type="GO" id="GO:0008270">
    <property type="term" value="F:zinc ion binding"/>
    <property type="evidence" value="ECO:0007669"/>
    <property type="project" value="UniProtKB-KW"/>
</dbReference>
<dbReference type="GO" id="GO:0045892">
    <property type="term" value="P:negative regulation of DNA-templated transcription"/>
    <property type="evidence" value="ECO:0000250"/>
    <property type="project" value="UniProtKB"/>
</dbReference>
<dbReference type="GO" id="GO:0000122">
    <property type="term" value="P:negative regulation of transcription by RNA polymerase II"/>
    <property type="evidence" value="ECO:0000250"/>
    <property type="project" value="UniProtKB"/>
</dbReference>
<dbReference type="CDD" id="cd06967">
    <property type="entry name" value="NR_DBD_TR2_like"/>
    <property type="match status" value="1"/>
</dbReference>
<dbReference type="CDD" id="cd06952">
    <property type="entry name" value="NR_LBD_TR2_like"/>
    <property type="match status" value="1"/>
</dbReference>
<dbReference type="FunFam" id="1.10.565.10:FF:000012">
    <property type="entry name" value="Nuclear receptor subfamily 2 group C member 1"/>
    <property type="match status" value="1"/>
</dbReference>
<dbReference type="FunFam" id="3.30.50.10:FF:000015">
    <property type="entry name" value="Nuclear receptor subfamily 2, group C, member 1"/>
    <property type="match status" value="1"/>
</dbReference>
<dbReference type="Gene3D" id="3.30.50.10">
    <property type="entry name" value="Erythroid Transcription Factor GATA-1, subunit A"/>
    <property type="match status" value="1"/>
</dbReference>
<dbReference type="Gene3D" id="1.10.565.10">
    <property type="entry name" value="Retinoid X Receptor"/>
    <property type="match status" value="1"/>
</dbReference>
<dbReference type="InterPro" id="IPR035500">
    <property type="entry name" value="NHR-like_dom_sf"/>
</dbReference>
<dbReference type="InterPro" id="IPR048245">
    <property type="entry name" value="NR2C1/2-like_DBD"/>
</dbReference>
<dbReference type="InterPro" id="IPR048246">
    <property type="entry name" value="NR2C1/2-like_LBD"/>
</dbReference>
<dbReference type="InterPro" id="IPR000536">
    <property type="entry name" value="Nucl_hrmn_rcpt_lig-bd"/>
</dbReference>
<dbReference type="InterPro" id="IPR050274">
    <property type="entry name" value="Nuclear_hormone_rcpt_NR2"/>
</dbReference>
<dbReference type="InterPro" id="IPR001723">
    <property type="entry name" value="Nuclear_hrmn_rcpt"/>
</dbReference>
<dbReference type="InterPro" id="IPR001628">
    <property type="entry name" value="Znf_hrmn_rcpt"/>
</dbReference>
<dbReference type="InterPro" id="IPR013088">
    <property type="entry name" value="Znf_NHR/GATA"/>
</dbReference>
<dbReference type="PANTHER" id="PTHR24083">
    <property type="entry name" value="NUCLEAR HORMONE RECEPTOR"/>
    <property type="match status" value="1"/>
</dbReference>
<dbReference type="Pfam" id="PF00104">
    <property type="entry name" value="Hormone_recep"/>
    <property type="match status" value="1"/>
</dbReference>
<dbReference type="Pfam" id="PF00105">
    <property type="entry name" value="zf-C4"/>
    <property type="match status" value="1"/>
</dbReference>
<dbReference type="PRINTS" id="PR01282">
    <property type="entry name" value="COUPTNFACTOR"/>
</dbReference>
<dbReference type="PRINTS" id="PR00398">
    <property type="entry name" value="STRDHORMONER"/>
</dbReference>
<dbReference type="PRINTS" id="PR00047">
    <property type="entry name" value="STROIDFINGER"/>
</dbReference>
<dbReference type="SMART" id="SM00430">
    <property type="entry name" value="HOLI"/>
    <property type="match status" value="1"/>
</dbReference>
<dbReference type="SMART" id="SM00399">
    <property type="entry name" value="ZnF_C4"/>
    <property type="match status" value="1"/>
</dbReference>
<dbReference type="SUPFAM" id="SSF57716">
    <property type="entry name" value="Glucocorticoid receptor-like (DNA-binding domain)"/>
    <property type="match status" value="1"/>
</dbReference>
<dbReference type="SUPFAM" id="SSF48508">
    <property type="entry name" value="Nuclear receptor ligand-binding domain"/>
    <property type="match status" value="1"/>
</dbReference>
<dbReference type="PROSITE" id="PS51843">
    <property type="entry name" value="NR_LBD"/>
    <property type="match status" value="1"/>
</dbReference>
<dbReference type="PROSITE" id="PS00031">
    <property type="entry name" value="NUCLEAR_REC_DBD_1"/>
    <property type="match status" value="1"/>
</dbReference>
<dbReference type="PROSITE" id="PS51030">
    <property type="entry name" value="NUCLEAR_REC_DBD_2"/>
    <property type="match status" value="1"/>
</dbReference>
<organism>
    <name type="scientific">Xenopus tropicalis</name>
    <name type="common">Western clawed frog</name>
    <name type="synonym">Silurana tropicalis</name>
    <dbReference type="NCBI Taxonomy" id="8364"/>
    <lineage>
        <taxon>Eukaryota</taxon>
        <taxon>Metazoa</taxon>
        <taxon>Chordata</taxon>
        <taxon>Craniata</taxon>
        <taxon>Vertebrata</taxon>
        <taxon>Euteleostomi</taxon>
        <taxon>Amphibia</taxon>
        <taxon>Batrachia</taxon>
        <taxon>Anura</taxon>
        <taxon>Pipoidea</taxon>
        <taxon>Pipidae</taxon>
        <taxon>Xenopodinae</taxon>
        <taxon>Xenopus</taxon>
        <taxon>Silurana</taxon>
    </lineage>
</organism>